<gene>
    <name evidence="1" type="primary">dnaA</name>
    <name type="ordered locus">SH0001</name>
</gene>
<comment type="function">
    <text evidence="1">Plays an essential role in the initiation and regulation of chromosomal replication. ATP-DnaA binds to the origin of replication (oriC) to initiate formation of the DNA replication initiation complex once per cell cycle. Binds the DnaA box (a 9 base pair repeat at the origin) and separates the double-stranded (ds)DNA. Forms a right-handed helical filament on oriC DNA; dsDNA binds to the exterior of the filament while single-stranded (ss)DNA is stabiized in the filament's interior. The ATP-DnaA-oriC complex binds and stabilizes one strand of the AT-rich DNA unwinding element (DUE), permitting loading of DNA polymerase. After initiation quickly degrades to an ADP-DnaA complex that is not apt for DNA replication. Binds acidic phospholipids.</text>
</comment>
<comment type="subunit">
    <text evidence="1">Oligomerizes as a right-handed, spiral filament on DNA at oriC.</text>
</comment>
<comment type="subcellular location">
    <subcellularLocation>
        <location evidence="1">Cytoplasm</location>
    </subcellularLocation>
</comment>
<comment type="domain">
    <text evidence="1">Domain I is involved in oligomerization and binding regulators, domain II is flexibile and of varying length in different bacteria, domain III forms the AAA+ region, while domain IV binds dsDNA.</text>
</comment>
<comment type="similarity">
    <text evidence="1">Belongs to the DnaA family.</text>
</comment>
<accession>Q4LAL5</accession>
<feature type="chain" id="PRO_1000048735" description="Chromosomal replication initiator protein DnaA">
    <location>
        <begin position="1"/>
        <end position="451"/>
    </location>
</feature>
<feature type="region of interest" description="Domain I, interacts with DnaA modulators" evidence="1">
    <location>
        <begin position="1"/>
        <end position="71"/>
    </location>
</feature>
<feature type="region of interest" description="Domain II" evidence="1">
    <location>
        <begin position="71"/>
        <end position="112"/>
    </location>
</feature>
<feature type="region of interest" description="Domain III, AAA+ region" evidence="1">
    <location>
        <begin position="113"/>
        <end position="329"/>
    </location>
</feature>
<feature type="region of interest" description="Domain IV, binds dsDNA" evidence="1">
    <location>
        <begin position="330"/>
        <end position="451"/>
    </location>
</feature>
<feature type="binding site" evidence="1">
    <location>
        <position position="157"/>
    </location>
    <ligand>
        <name>ATP</name>
        <dbReference type="ChEBI" id="CHEBI:30616"/>
    </ligand>
</feature>
<feature type="binding site" evidence="1">
    <location>
        <position position="159"/>
    </location>
    <ligand>
        <name>ATP</name>
        <dbReference type="ChEBI" id="CHEBI:30616"/>
    </ligand>
</feature>
<feature type="binding site" evidence="1">
    <location>
        <position position="160"/>
    </location>
    <ligand>
        <name>ATP</name>
        <dbReference type="ChEBI" id="CHEBI:30616"/>
    </ligand>
</feature>
<feature type="binding site" evidence="1">
    <location>
        <position position="161"/>
    </location>
    <ligand>
        <name>ATP</name>
        <dbReference type="ChEBI" id="CHEBI:30616"/>
    </ligand>
</feature>
<protein>
    <recommendedName>
        <fullName evidence="1">Chromosomal replication initiator protein DnaA</fullName>
    </recommendedName>
</protein>
<reference key="1">
    <citation type="journal article" date="2005" name="J. Bacteriol.">
        <title>Whole-genome sequencing of Staphylococcus haemolyticus uncovers the extreme plasticity of its genome and the evolution of human-colonizing staphylococcal species.</title>
        <authorList>
            <person name="Takeuchi F."/>
            <person name="Watanabe S."/>
            <person name="Baba T."/>
            <person name="Yuzawa H."/>
            <person name="Ito T."/>
            <person name="Morimoto Y."/>
            <person name="Kuroda M."/>
            <person name="Cui L."/>
            <person name="Takahashi M."/>
            <person name="Ankai A."/>
            <person name="Baba S."/>
            <person name="Fukui S."/>
            <person name="Lee J.C."/>
            <person name="Hiramatsu K."/>
        </authorList>
    </citation>
    <scope>NUCLEOTIDE SEQUENCE [LARGE SCALE GENOMIC DNA]</scope>
    <source>
        <strain>JCSC1435</strain>
    </source>
</reference>
<dbReference type="EMBL" id="AP006716">
    <property type="protein sequence ID" value="BAE03310.1"/>
    <property type="molecule type" value="Genomic_DNA"/>
</dbReference>
<dbReference type="RefSeq" id="WP_011274359.1">
    <property type="nucleotide sequence ID" value="NC_007168.1"/>
</dbReference>
<dbReference type="SMR" id="Q4LAL5"/>
<dbReference type="KEGG" id="sha:SH0001"/>
<dbReference type="eggNOG" id="COG0593">
    <property type="taxonomic scope" value="Bacteria"/>
</dbReference>
<dbReference type="HOGENOM" id="CLU_026910_3_1_9"/>
<dbReference type="OrthoDB" id="9807019at2"/>
<dbReference type="Proteomes" id="UP000000543">
    <property type="component" value="Chromosome"/>
</dbReference>
<dbReference type="GO" id="GO:0005737">
    <property type="term" value="C:cytoplasm"/>
    <property type="evidence" value="ECO:0007669"/>
    <property type="project" value="UniProtKB-SubCell"/>
</dbReference>
<dbReference type="GO" id="GO:0005886">
    <property type="term" value="C:plasma membrane"/>
    <property type="evidence" value="ECO:0007669"/>
    <property type="project" value="TreeGrafter"/>
</dbReference>
<dbReference type="GO" id="GO:0005524">
    <property type="term" value="F:ATP binding"/>
    <property type="evidence" value="ECO:0007669"/>
    <property type="project" value="UniProtKB-UniRule"/>
</dbReference>
<dbReference type="GO" id="GO:0016887">
    <property type="term" value="F:ATP hydrolysis activity"/>
    <property type="evidence" value="ECO:0007669"/>
    <property type="project" value="InterPro"/>
</dbReference>
<dbReference type="GO" id="GO:0003688">
    <property type="term" value="F:DNA replication origin binding"/>
    <property type="evidence" value="ECO:0007669"/>
    <property type="project" value="UniProtKB-UniRule"/>
</dbReference>
<dbReference type="GO" id="GO:0008289">
    <property type="term" value="F:lipid binding"/>
    <property type="evidence" value="ECO:0007669"/>
    <property type="project" value="UniProtKB-KW"/>
</dbReference>
<dbReference type="GO" id="GO:0006270">
    <property type="term" value="P:DNA replication initiation"/>
    <property type="evidence" value="ECO:0007669"/>
    <property type="project" value="UniProtKB-UniRule"/>
</dbReference>
<dbReference type="GO" id="GO:0006275">
    <property type="term" value="P:regulation of DNA replication"/>
    <property type="evidence" value="ECO:0007669"/>
    <property type="project" value="UniProtKB-UniRule"/>
</dbReference>
<dbReference type="CDD" id="cd00009">
    <property type="entry name" value="AAA"/>
    <property type="match status" value="1"/>
</dbReference>
<dbReference type="CDD" id="cd06571">
    <property type="entry name" value="Bac_DnaA_C"/>
    <property type="match status" value="1"/>
</dbReference>
<dbReference type="FunFam" id="1.10.1750.10:FF:000003">
    <property type="entry name" value="Chromosomal replication initiator protein DnaA"/>
    <property type="match status" value="1"/>
</dbReference>
<dbReference type="FunFam" id="1.10.8.60:FF:000003">
    <property type="entry name" value="Chromosomal replication initiator protein DnaA"/>
    <property type="match status" value="1"/>
</dbReference>
<dbReference type="FunFam" id="3.40.50.300:FF:000150">
    <property type="entry name" value="Chromosomal replication initiator protein DnaA"/>
    <property type="match status" value="1"/>
</dbReference>
<dbReference type="Gene3D" id="1.10.1750.10">
    <property type="match status" value="1"/>
</dbReference>
<dbReference type="Gene3D" id="1.10.8.60">
    <property type="match status" value="1"/>
</dbReference>
<dbReference type="Gene3D" id="3.30.300.180">
    <property type="match status" value="1"/>
</dbReference>
<dbReference type="Gene3D" id="3.40.50.300">
    <property type="entry name" value="P-loop containing nucleotide triphosphate hydrolases"/>
    <property type="match status" value="1"/>
</dbReference>
<dbReference type="HAMAP" id="MF_00377">
    <property type="entry name" value="DnaA_bact"/>
    <property type="match status" value="1"/>
</dbReference>
<dbReference type="InterPro" id="IPR003593">
    <property type="entry name" value="AAA+_ATPase"/>
</dbReference>
<dbReference type="InterPro" id="IPR001957">
    <property type="entry name" value="Chromosome_initiator_DnaA"/>
</dbReference>
<dbReference type="InterPro" id="IPR020591">
    <property type="entry name" value="Chromosome_initiator_DnaA-like"/>
</dbReference>
<dbReference type="InterPro" id="IPR018312">
    <property type="entry name" value="Chromosome_initiator_DnaA_CS"/>
</dbReference>
<dbReference type="InterPro" id="IPR013159">
    <property type="entry name" value="DnaA_C"/>
</dbReference>
<dbReference type="InterPro" id="IPR013317">
    <property type="entry name" value="DnaA_dom"/>
</dbReference>
<dbReference type="InterPro" id="IPR024633">
    <property type="entry name" value="DnaA_N_dom"/>
</dbReference>
<dbReference type="InterPro" id="IPR038454">
    <property type="entry name" value="DnaA_N_sf"/>
</dbReference>
<dbReference type="InterPro" id="IPR027417">
    <property type="entry name" value="P-loop_NTPase"/>
</dbReference>
<dbReference type="InterPro" id="IPR010921">
    <property type="entry name" value="Trp_repressor/repl_initiator"/>
</dbReference>
<dbReference type="NCBIfam" id="TIGR00362">
    <property type="entry name" value="DnaA"/>
    <property type="match status" value="1"/>
</dbReference>
<dbReference type="PANTHER" id="PTHR30050">
    <property type="entry name" value="CHROMOSOMAL REPLICATION INITIATOR PROTEIN DNAA"/>
    <property type="match status" value="1"/>
</dbReference>
<dbReference type="PANTHER" id="PTHR30050:SF2">
    <property type="entry name" value="CHROMOSOMAL REPLICATION INITIATOR PROTEIN DNAA"/>
    <property type="match status" value="1"/>
</dbReference>
<dbReference type="Pfam" id="PF00308">
    <property type="entry name" value="Bac_DnaA"/>
    <property type="match status" value="1"/>
</dbReference>
<dbReference type="Pfam" id="PF08299">
    <property type="entry name" value="Bac_DnaA_C"/>
    <property type="match status" value="1"/>
</dbReference>
<dbReference type="Pfam" id="PF11638">
    <property type="entry name" value="DnaA_N"/>
    <property type="match status" value="1"/>
</dbReference>
<dbReference type="PRINTS" id="PR00051">
    <property type="entry name" value="DNAA"/>
</dbReference>
<dbReference type="SMART" id="SM00382">
    <property type="entry name" value="AAA"/>
    <property type="match status" value="1"/>
</dbReference>
<dbReference type="SMART" id="SM00760">
    <property type="entry name" value="Bac_DnaA_C"/>
    <property type="match status" value="1"/>
</dbReference>
<dbReference type="SUPFAM" id="SSF52540">
    <property type="entry name" value="P-loop containing nucleoside triphosphate hydrolases"/>
    <property type="match status" value="1"/>
</dbReference>
<dbReference type="SUPFAM" id="SSF48295">
    <property type="entry name" value="TrpR-like"/>
    <property type="match status" value="1"/>
</dbReference>
<dbReference type="PROSITE" id="PS01008">
    <property type="entry name" value="DNAA"/>
    <property type="match status" value="1"/>
</dbReference>
<evidence type="ECO:0000255" key="1">
    <source>
        <dbReference type="HAMAP-Rule" id="MF_00377"/>
    </source>
</evidence>
<proteinExistence type="inferred from homology"/>
<sequence length="451" mass="52114">MSEQEIWKKVLEVAESEISKSTFNTFLKDTELKEIRDNVAIIFVIHEFYAEWLNSNYKEVIQTIMKDVIGYEVEPKFFTAEQLAELDETSRKSNTPSEPQRQIIEYGHEGTDQFNTHNTFDTFVIGPGNRFPHAASLAVAEAPAQAYNPLFIYGGVGLGKTHLMHAIGHHVLSNQPNAKVLYTSSEKFTNDFIKSIRNNEPEAFREKYRNIDVLLIDDIQFIQNKEQTQEEFFHTFNELHQNKKQIVISSDRPPKEIAKLEDRLRSRFEWGLIVDITPPDYETRMAILQKKIEEENLEIPAEALNYIANQIQSNIRELEGALTRLLAYSKLQGRPITTELAAEALKDIIQVPKSKKITIQDIQKVVGHYYNVRIEDFSAKKRTKSIAYPRQIAMYLSRELTDFSLPKIGEEFGGRDHTTVIHAHEKIAKDIKADTIFKQEVEDLEKEIRNQ</sequence>
<name>DNAA_STAHJ</name>
<keyword id="KW-0067">ATP-binding</keyword>
<keyword id="KW-0963">Cytoplasm</keyword>
<keyword id="KW-0235">DNA replication</keyword>
<keyword id="KW-0238">DNA-binding</keyword>
<keyword id="KW-0446">Lipid-binding</keyword>
<keyword id="KW-0547">Nucleotide-binding</keyword>
<organism>
    <name type="scientific">Staphylococcus haemolyticus (strain JCSC1435)</name>
    <dbReference type="NCBI Taxonomy" id="279808"/>
    <lineage>
        <taxon>Bacteria</taxon>
        <taxon>Bacillati</taxon>
        <taxon>Bacillota</taxon>
        <taxon>Bacilli</taxon>
        <taxon>Bacillales</taxon>
        <taxon>Staphylococcaceae</taxon>
        <taxon>Staphylococcus</taxon>
    </lineage>
</organism>